<protein>
    <recommendedName>
        <fullName evidence="1">DNA mismatch repair protein MutS</fullName>
    </recommendedName>
</protein>
<feature type="chain" id="PRO_1000008108" description="DNA mismatch repair protein MutS">
    <location>
        <begin position="1"/>
        <end position="851"/>
    </location>
</feature>
<feature type="binding site" evidence="1">
    <location>
        <begin position="602"/>
        <end position="609"/>
    </location>
    <ligand>
        <name>ATP</name>
        <dbReference type="ChEBI" id="CHEBI:30616"/>
    </ligand>
</feature>
<evidence type="ECO:0000255" key="1">
    <source>
        <dbReference type="HAMAP-Rule" id="MF_00096"/>
    </source>
</evidence>
<reference key="1">
    <citation type="journal article" date="2006" name="Proc. Natl. Acad. Sci. U.S.A.">
        <title>Molecular genetic anatomy of inter- and intraserotype variation in the human bacterial pathogen group A Streptococcus.</title>
        <authorList>
            <person name="Beres S.B."/>
            <person name="Richter E.W."/>
            <person name="Nagiec M.J."/>
            <person name="Sumby P."/>
            <person name="Porcella S.F."/>
            <person name="DeLeo F.R."/>
            <person name="Musser J.M."/>
        </authorList>
    </citation>
    <scope>NUCLEOTIDE SEQUENCE [LARGE SCALE GENOMIC DNA]</scope>
    <source>
        <strain>MGAS9429</strain>
    </source>
</reference>
<dbReference type="EMBL" id="CP000259">
    <property type="protein sequence ID" value="ABF33003.1"/>
    <property type="molecule type" value="Genomic_DNA"/>
</dbReference>
<dbReference type="RefSeq" id="WP_002991365.1">
    <property type="nucleotide sequence ID" value="NC_008021.1"/>
</dbReference>
<dbReference type="SMR" id="Q1JJH0"/>
<dbReference type="KEGG" id="spk:MGAS9429_Spy1816"/>
<dbReference type="HOGENOM" id="CLU_002472_3_1_9"/>
<dbReference type="Proteomes" id="UP000002433">
    <property type="component" value="Chromosome"/>
</dbReference>
<dbReference type="GO" id="GO:0005829">
    <property type="term" value="C:cytosol"/>
    <property type="evidence" value="ECO:0007669"/>
    <property type="project" value="TreeGrafter"/>
</dbReference>
<dbReference type="GO" id="GO:0005524">
    <property type="term" value="F:ATP binding"/>
    <property type="evidence" value="ECO:0007669"/>
    <property type="project" value="UniProtKB-UniRule"/>
</dbReference>
<dbReference type="GO" id="GO:0140664">
    <property type="term" value="F:ATP-dependent DNA damage sensor activity"/>
    <property type="evidence" value="ECO:0007669"/>
    <property type="project" value="InterPro"/>
</dbReference>
<dbReference type="GO" id="GO:0003684">
    <property type="term" value="F:damaged DNA binding"/>
    <property type="evidence" value="ECO:0007669"/>
    <property type="project" value="UniProtKB-UniRule"/>
</dbReference>
<dbReference type="GO" id="GO:0030983">
    <property type="term" value="F:mismatched DNA binding"/>
    <property type="evidence" value="ECO:0007669"/>
    <property type="project" value="InterPro"/>
</dbReference>
<dbReference type="GO" id="GO:0006298">
    <property type="term" value="P:mismatch repair"/>
    <property type="evidence" value="ECO:0007669"/>
    <property type="project" value="UniProtKB-UniRule"/>
</dbReference>
<dbReference type="CDD" id="cd03284">
    <property type="entry name" value="ABC_MutS1"/>
    <property type="match status" value="1"/>
</dbReference>
<dbReference type="FunFam" id="1.10.1420.10:FF:000001">
    <property type="entry name" value="DNA mismatch repair protein MutS"/>
    <property type="match status" value="1"/>
</dbReference>
<dbReference type="FunFam" id="3.40.1170.10:FF:000001">
    <property type="entry name" value="DNA mismatch repair protein MutS"/>
    <property type="match status" value="1"/>
</dbReference>
<dbReference type="FunFam" id="3.40.50.300:FF:000896">
    <property type="entry name" value="DNA mismatch repair protein MutS"/>
    <property type="match status" value="1"/>
</dbReference>
<dbReference type="Gene3D" id="1.10.1420.10">
    <property type="match status" value="2"/>
</dbReference>
<dbReference type="Gene3D" id="3.40.1170.10">
    <property type="entry name" value="DNA repair protein MutS, domain I"/>
    <property type="match status" value="1"/>
</dbReference>
<dbReference type="Gene3D" id="3.30.420.110">
    <property type="entry name" value="MutS, connector domain"/>
    <property type="match status" value="1"/>
</dbReference>
<dbReference type="Gene3D" id="3.40.50.300">
    <property type="entry name" value="P-loop containing nucleotide triphosphate hydrolases"/>
    <property type="match status" value="1"/>
</dbReference>
<dbReference type="HAMAP" id="MF_00096">
    <property type="entry name" value="MutS"/>
    <property type="match status" value="1"/>
</dbReference>
<dbReference type="InterPro" id="IPR005748">
    <property type="entry name" value="DNA_mismatch_repair_MutS"/>
</dbReference>
<dbReference type="InterPro" id="IPR007695">
    <property type="entry name" value="DNA_mismatch_repair_MutS-lik_N"/>
</dbReference>
<dbReference type="InterPro" id="IPR017261">
    <property type="entry name" value="DNA_mismatch_repair_MutS/MSH"/>
</dbReference>
<dbReference type="InterPro" id="IPR000432">
    <property type="entry name" value="DNA_mismatch_repair_MutS_C"/>
</dbReference>
<dbReference type="InterPro" id="IPR007861">
    <property type="entry name" value="DNA_mismatch_repair_MutS_clamp"/>
</dbReference>
<dbReference type="InterPro" id="IPR007696">
    <property type="entry name" value="DNA_mismatch_repair_MutS_core"/>
</dbReference>
<dbReference type="InterPro" id="IPR016151">
    <property type="entry name" value="DNA_mismatch_repair_MutS_N"/>
</dbReference>
<dbReference type="InterPro" id="IPR036187">
    <property type="entry name" value="DNA_mismatch_repair_MutS_sf"/>
</dbReference>
<dbReference type="InterPro" id="IPR007860">
    <property type="entry name" value="DNA_mmatch_repair_MutS_con_dom"/>
</dbReference>
<dbReference type="InterPro" id="IPR045076">
    <property type="entry name" value="MutS"/>
</dbReference>
<dbReference type="InterPro" id="IPR036678">
    <property type="entry name" value="MutS_con_dom_sf"/>
</dbReference>
<dbReference type="InterPro" id="IPR027417">
    <property type="entry name" value="P-loop_NTPase"/>
</dbReference>
<dbReference type="NCBIfam" id="TIGR01070">
    <property type="entry name" value="mutS1"/>
    <property type="match status" value="1"/>
</dbReference>
<dbReference type="NCBIfam" id="NF003810">
    <property type="entry name" value="PRK05399.1"/>
    <property type="match status" value="1"/>
</dbReference>
<dbReference type="PANTHER" id="PTHR11361:SF34">
    <property type="entry name" value="DNA MISMATCH REPAIR PROTEIN MSH1, MITOCHONDRIAL"/>
    <property type="match status" value="1"/>
</dbReference>
<dbReference type="PANTHER" id="PTHR11361">
    <property type="entry name" value="DNA MISMATCH REPAIR PROTEIN MUTS FAMILY MEMBER"/>
    <property type="match status" value="1"/>
</dbReference>
<dbReference type="Pfam" id="PF01624">
    <property type="entry name" value="MutS_I"/>
    <property type="match status" value="1"/>
</dbReference>
<dbReference type="Pfam" id="PF05188">
    <property type="entry name" value="MutS_II"/>
    <property type="match status" value="1"/>
</dbReference>
<dbReference type="Pfam" id="PF05192">
    <property type="entry name" value="MutS_III"/>
    <property type="match status" value="1"/>
</dbReference>
<dbReference type="Pfam" id="PF05190">
    <property type="entry name" value="MutS_IV"/>
    <property type="match status" value="1"/>
</dbReference>
<dbReference type="Pfam" id="PF00488">
    <property type="entry name" value="MutS_V"/>
    <property type="match status" value="1"/>
</dbReference>
<dbReference type="PIRSF" id="PIRSF037677">
    <property type="entry name" value="DNA_mis_repair_Msh6"/>
    <property type="match status" value="1"/>
</dbReference>
<dbReference type="SMART" id="SM00534">
    <property type="entry name" value="MUTSac"/>
    <property type="match status" value="1"/>
</dbReference>
<dbReference type="SMART" id="SM00533">
    <property type="entry name" value="MUTSd"/>
    <property type="match status" value="1"/>
</dbReference>
<dbReference type="SUPFAM" id="SSF55271">
    <property type="entry name" value="DNA repair protein MutS, domain I"/>
    <property type="match status" value="1"/>
</dbReference>
<dbReference type="SUPFAM" id="SSF53150">
    <property type="entry name" value="DNA repair protein MutS, domain II"/>
    <property type="match status" value="1"/>
</dbReference>
<dbReference type="SUPFAM" id="SSF48334">
    <property type="entry name" value="DNA repair protein MutS, domain III"/>
    <property type="match status" value="1"/>
</dbReference>
<dbReference type="SUPFAM" id="SSF52540">
    <property type="entry name" value="P-loop containing nucleoside triphosphate hydrolases"/>
    <property type="match status" value="1"/>
</dbReference>
<dbReference type="PROSITE" id="PS00486">
    <property type="entry name" value="DNA_MISMATCH_REPAIR_2"/>
    <property type="match status" value="1"/>
</dbReference>
<name>MUTS_STRPC</name>
<sequence length="851" mass="95594">MTKTNISPGMQQYLDIKKDYPDAFLLFRMGDFYELFYEDAVKAAQLLEIGLTSRNKNAENPIPMAGVPHHSAQQYIDVLIELGYKVAVAEQMEDPKQAVGVVKREVVQVITPGTVVDSAKPDSANNFLVAVDFDGCRYGLAYMDVSTGEFCVTDLADFTSVRSEIQNLKAKEVLLGFDLSEEEQTILVKQMNLLLSYEETVYEDKSLIDGQLTTVELTAAGKLLQYVHKTQMRELSHLQALVHYEIKDYLQMSYATKSSLDLVENARTNKKHGSLYWLLDETKTAMGMRLLRSWIDRPLVSKEAILERQEIIQVFLNAFIERTDLSNSLKGVYDIERLSSRVSFGKANPKDLLQLGYTLAQVPYIKAILESFDSPCVDKLVNDIDSLPELEYLIRTAIDPDAPATISEGSIIRTGFDERLDHYRKVMREGTGWIADIEAKERQESGINNLKIDYNKKDGYYFHVTNSNLSLVPEHFFRKATLKNSERYGTAELAKIEGQMLEAREESSSLEYDIFMCIRAQVETYINRLQKLAKTLATVDVLQSLAVVAETNHYIRPQFNDNHVITIQEGRHAVVEKVMGVQEYIPNSISFDQQTSIQLITGPNMSGKSTYMRQLALTVIMAQMGSFVAADHVDLPLFDAIFTRIGAADDLISGQSTFMVEMMEANQAIKRASDNSLILFDELGRGTATYDGMALAQAIIEYIHDRVGAKTIFATHYHELTDLSTKLTSLVNVHVATLEKDGDVTFLHKIAEGPADKSYGIHVAKIAGLPKSLLKRADEVLTRLETQSRSTEIMSVPPQVESSSAVRQGQLSLFGDDEKAHEIRQALEAIDVMNMTPFQAMTTLYELKKLL</sequence>
<keyword id="KW-0067">ATP-binding</keyword>
<keyword id="KW-0227">DNA damage</keyword>
<keyword id="KW-0234">DNA repair</keyword>
<keyword id="KW-0238">DNA-binding</keyword>
<keyword id="KW-0547">Nucleotide-binding</keyword>
<accession>Q1JJH0</accession>
<gene>
    <name evidence="1" type="primary">mutS</name>
    <name type="ordered locus">MGAS9429_Spy1816</name>
</gene>
<organism>
    <name type="scientific">Streptococcus pyogenes serotype M12 (strain MGAS9429)</name>
    <dbReference type="NCBI Taxonomy" id="370551"/>
    <lineage>
        <taxon>Bacteria</taxon>
        <taxon>Bacillati</taxon>
        <taxon>Bacillota</taxon>
        <taxon>Bacilli</taxon>
        <taxon>Lactobacillales</taxon>
        <taxon>Streptococcaceae</taxon>
        <taxon>Streptococcus</taxon>
    </lineage>
</organism>
<proteinExistence type="inferred from homology"/>
<comment type="function">
    <text evidence="1">This protein is involved in the repair of mismatches in DNA. It is possible that it carries out the mismatch recognition step. This protein has a weak ATPase activity.</text>
</comment>
<comment type="similarity">
    <text evidence="1">Belongs to the DNA mismatch repair MutS family.</text>
</comment>